<accession>C3L9Q5</accession>
<keyword id="KW-0004">4Fe-4S</keyword>
<keyword id="KW-0028">Amino-acid biosynthesis</keyword>
<keyword id="KW-0100">Branched-chain amino acid biosynthesis</keyword>
<keyword id="KW-0408">Iron</keyword>
<keyword id="KW-0411">Iron-sulfur</keyword>
<keyword id="KW-0432">Leucine biosynthesis</keyword>
<keyword id="KW-0456">Lyase</keyword>
<keyword id="KW-0479">Metal-binding</keyword>
<proteinExistence type="inferred from homology"/>
<reference key="1">
    <citation type="submission" date="2008-10" db="EMBL/GenBank/DDBJ databases">
        <title>Genome sequence of Bacillus anthracis str. CDC 684.</title>
        <authorList>
            <person name="Dodson R.J."/>
            <person name="Munk A.C."/>
            <person name="Brettin T."/>
            <person name="Bruce D."/>
            <person name="Detter C."/>
            <person name="Tapia R."/>
            <person name="Han C."/>
            <person name="Sutton G."/>
            <person name="Sims D."/>
        </authorList>
    </citation>
    <scope>NUCLEOTIDE SEQUENCE [LARGE SCALE GENOMIC DNA]</scope>
    <source>
        <strain>CDC 684 / NRRL 3495</strain>
    </source>
</reference>
<comment type="function">
    <text evidence="1">Catalyzes the isomerization between 2-isopropylmalate and 3-isopropylmalate, via the formation of 2-isopropylmaleate.</text>
</comment>
<comment type="catalytic activity">
    <reaction evidence="1">
        <text>(2R,3S)-3-isopropylmalate = (2S)-2-isopropylmalate</text>
        <dbReference type="Rhea" id="RHEA:32287"/>
        <dbReference type="ChEBI" id="CHEBI:1178"/>
        <dbReference type="ChEBI" id="CHEBI:35121"/>
        <dbReference type="EC" id="4.2.1.33"/>
    </reaction>
</comment>
<comment type="cofactor">
    <cofactor evidence="1">
        <name>[4Fe-4S] cluster</name>
        <dbReference type="ChEBI" id="CHEBI:49883"/>
    </cofactor>
    <text evidence="1">Binds 1 [4Fe-4S] cluster per subunit.</text>
</comment>
<comment type="pathway">
    <text evidence="1">Amino-acid biosynthesis; L-leucine biosynthesis; L-leucine from 3-methyl-2-oxobutanoate: step 2/4.</text>
</comment>
<comment type="subunit">
    <text evidence="1">Heterodimer of LeuC and LeuD.</text>
</comment>
<comment type="similarity">
    <text evidence="1">Belongs to the aconitase/IPM isomerase family. LeuC type 1 subfamily.</text>
</comment>
<name>LEUC_BACAC</name>
<evidence type="ECO:0000255" key="1">
    <source>
        <dbReference type="HAMAP-Rule" id="MF_01026"/>
    </source>
</evidence>
<dbReference type="EC" id="4.2.1.33" evidence="1"/>
<dbReference type="EMBL" id="CP001215">
    <property type="protein sequence ID" value="ACP13841.1"/>
    <property type="molecule type" value="Genomic_DNA"/>
</dbReference>
<dbReference type="RefSeq" id="WP_000520131.1">
    <property type="nucleotide sequence ID" value="NC_012581.1"/>
</dbReference>
<dbReference type="SMR" id="C3L9Q5"/>
<dbReference type="GeneID" id="45021401"/>
<dbReference type="KEGG" id="bah:BAMEG_3173"/>
<dbReference type="HOGENOM" id="CLU_006714_3_4_9"/>
<dbReference type="UniPathway" id="UPA00048">
    <property type="reaction ID" value="UER00071"/>
</dbReference>
<dbReference type="GO" id="GO:0003861">
    <property type="term" value="F:3-isopropylmalate dehydratase activity"/>
    <property type="evidence" value="ECO:0007669"/>
    <property type="project" value="UniProtKB-UniRule"/>
</dbReference>
<dbReference type="GO" id="GO:0051539">
    <property type="term" value="F:4 iron, 4 sulfur cluster binding"/>
    <property type="evidence" value="ECO:0007669"/>
    <property type="project" value="UniProtKB-KW"/>
</dbReference>
<dbReference type="GO" id="GO:0046872">
    <property type="term" value="F:metal ion binding"/>
    <property type="evidence" value="ECO:0007669"/>
    <property type="project" value="UniProtKB-KW"/>
</dbReference>
<dbReference type="GO" id="GO:0009098">
    <property type="term" value="P:L-leucine biosynthetic process"/>
    <property type="evidence" value="ECO:0007669"/>
    <property type="project" value="UniProtKB-UniRule"/>
</dbReference>
<dbReference type="CDD" id="cd01583">
    <property type="entry name" value="IPMI"/>
    <property type="match status" value="1"/>
</dbReference>
<dbReference type="FunFam" id="3.30.499.10:FF:000007">
    <property type="entry name" value="3-isopropylmalate dehydratase large subunit"/>
    <property type="match status" value="1"/>
</dbReference>
<dbReference type="Gene3D" id="3.30.499.10">
    <property type="entry name" value="Aconitase, domain 3"/>
    <property type="match status" value="2"/>
</dbReference>
<dbReference type="HAMAP" id="MF_01026">
    <property type="entry name" value="LeuC_type1"/>
    <property type="match status" value="1"/>
</dbReference>
<dbReference type="InterPro" id="IPR004430">
    <property type="entry name" value="3-IsopropMal_deHydase_lsu"/>
</dbReference>
<dbReference type="InterPro" id="IPR015931">
    <property type="entry name" value="Acnase/IPM_dHydase_lsu_aba_1/3"/>
</dbReference>
<dbReference type="InterPro" id="IPR001030">
    <property type="entry name" value="Acoase/IPM_deHydtase_lsu_aba"/>
</dbReference>
<dbReference type="InterPro" id="IPR018136">
    <property type="entry name" value="Aconitase_4Fe-4S_BS"/>
</dbReference>
<dbReference type="InterPro" id="IPR036008">
    <property type="entry name" value="Aconitase_4Fe-4S_dom"/>
</dbReference>
<dbReference type="InterPro" id="IPR050067">
    <property type="entry name" value="IPM_dehydratase_rel_enz"/>
</dbReference>
<dbReference type="InterPro" id="IPR033941">
    <property type="entry name" value="IPMI_cat"/>
</dbReference>
<dbReference type="NCBIfam" id="TIGR00170">
    <property type="entry name" value="leuC"/>
    <property type="match status" value="1"/>
</dbReference>
<dbReference type="NCBIfam" id="NF004016">
    <property type="entry name" value="PRK05478.1"/>
    <property type="match status" value="1"/>
</dbReference>
<dbReference type="NCBIfam" id="NF009116">
    <property type="entry name" value="PRK12466.1"/>
    <property type="match status" value="1"/>
</dbReference>
<dbReference type="PANTHER" id="PTHR43822:SF9">
    <property type="entry name" value="3-ISOPROPYLMALATE DEHYDRATASE"/>
    <property type="match status" value="1"/>
</dbReference>
<dbReference type="PANTHER" id="PTHR43822">
    <property type="entry name" value="HOMOACONITASE, MITOCHONDRIAL-RELATED"/>
    <property type="match status" value="1"/>
</dbReference>
<dbReference type="Pfam" id="PF00330">
    <property type="entry name" value="Aconitase"/>
    <property type="match status" value="1"/>
</dbReference>
<dbReference type="PRINTS" id="PR00415">
    <property type="entry name" value="ACONITASE"/>
</dbReference>
<dbReference type="SUPFAM" id="SSF53732">
    <property type="entry name" value="Aconitase iron-sulfur domain"/>
    <property type="match status" value="1"/>
</dbReference>
<dbReference type="PROSITE" id="PS00450">
    <property type="entry name" value="ACONITASE_1"/>
    <property type="match status" value="1"/>
</dbReference>
<dbReference type="PROSITE" id="PS01244">
    <property type="entry name" value="ACONITASE_2"/>
    <property type="match status" value="1"/>
</dbReference>
<sequence>MGKRLLDKLWERHVVTTNENGLDLLYIDLHLVHEVTSPQAFEGLRLTNRTVRRPDLTFATMDHNIPTKDVWNITDRIAKQQLDTLRENCKQFQVPLADIGDEEQGIVHVIGPELGLTQPGKTIVCGDSHTATHGAFGALAFGIGTSEVEHVLATQTLWQRKPKAMGIELKGKLQKGVYAKDIILHLLSKYGVAVGTGYVMEFYGETIGTMEMEERMTLCNMAIEGGAKAGIIAPDEKTFAYVKGRKYAPRDYETFEKKWFELYTDADAIYDLHISIDVTDLAPYVTWGTNPSMGVRIDEKLPEKHDVNDERAFSYMGLIPGQSTYDIPVQHVFIGSCTNSRLSDLEIAASVVKGRKVKEGVRALVVPGSKRVRDAAMQKGLHHIFEEAGFEWREPGCSMCLGMNPDQVPEGEHCASTSNRNFEGRQGKGARTHLVSPAMAAAAALYGHFVDIRKESYDGAISYS</sequence>
<gene>
    <name evidence="1" type="primary">leuC</name>
    <name type="ordered locus">BAMEG_3173</name>
</gene>
<protein>
    <recommendedName>
        <fullName evidence="1">3-isopropylmalate dehydratase large subunit</fullName>
        <ecNumber evidence="1">4.2.1.33</ecNumber>
    </recommendedName>
    <alternativeName>
        <fullName evidence="1">Alpha-IPM isomerase</fullName>
        <shortName evidence="1">IPMI</shortName>
    </alternativeName>
    <alternativeName>
        <fullName evidence="1">Isopropylmalate isomerase</fullName>
    </alternativeName>
</protein>
<feature type="chain" id="PRO_1000149351" description="3-isopropylmalate dehydratase large subunit">
    <location>
        <begin position="1"/>
        <end position="464"/>
    </location>
</feature>
<feature type="binding site" evidence="1">
    <location>
        <position position="337"/>
    </location>
    <ligand>
        <name>[4Fe-4S] cluster</name>
        <dbReference type="ChEBI" id="CHEBI:49883"/>
    </ligand>
</feature>
<feature type="binding site" evidence="1">
    <location>
        <position position="397"/>
    </location>
    <ligand>
        <name>[4Fe-4S] cluster</name>
        <dbReference type="ChEBI" id="CHEBI:49883"/>
    </ligand>
</feature>
<feature type="binding site" evidence="1">
    <location>
        <position position="400"/>
    </location>
    <ligand>
        <name>[4Fe-4S] cluster</name>
        <dbReference type="ChEBI" id="CHEBI:49883"/>
    </ligand>
</feature>
<organism>
    <name type="scientific">Bacillus anthracis (strain CDC 684 / NRRL 3495)</name>
    <dbReference type="NCBI Taxonomy" id="568206"/>
    <lineage>
        <taxon>Bacteria</taxon>
        <taxon>Bacillati</taxon>
        <taxon>Bacillota</taxon>
        <taxon>Bacilli</taxon>
        <taxon>Bacillales</taxon>
        <taxon>Bacillaceae</taxon>
        <taxon>Bacillus</taxon>
        <taxon>Bacillus cereus group</taxon>
    </lineage>
</organism>